<organism>
    <name type="scientific">Treponema denticola (strain ATCC 35405 / DSM 14222 / CIP 103919 / JCM 8153 / KCTC 15104)</name>
    <dbReference type="NCBI Taxonomy" id="243275"/>
    <lineage>
        <taxon>Bacteria</taxon>
        <taxon>Pseudomonadati</taxon>
        <taxon>Spirochaetota</taxon>
        <taxon>Spirochaetia</taxon>
        <taxon>Spirochaetales</taxon>
        <taxon>Treponemataceae</taxon>
        <taxon>Treponema</taxon>
    </lineage>
</organism>
<evidence type="ECO:0000255" key="1">
    <source>
        <dbReference type="HAMAP-Rule" id="MF_00191"/>
    </source>
</evidence>
<protein>
    <recommendedName>
        <fullName evidence="1">4-hydroxy-3-methylbut-2-enyl diphosphate reductase</fullName>
        <shortName evidence="1">HMBPP reductase</shortName>
        <ecNumber evidence="1">1.17.7.4</ecNumber>
    </recommendedName>
</protein>
<keyword id="KW-0004">4Fe-4S</keyword>
<keyword id="KW-0408">Iron</keyword>
<keyword id="KW-0411">Iron-sulfur</keyword>
<keyword id="KW-0414">Isoprene biosynthesis</keyword>
<keyword id="KW-0479">Metal-binding</keyword>
<keyword id="KW-0560">Oxidoreductase</keyword>
<keyword id="KW-1185">Reference proteome</keyword>
<comment type="function">
    <text evidence="1">Catalyzes the conversion of 1-hydroxy-2-methyl-2-(E)-butenyl 4-diphosphate (HMBPP) into a mixture of isopentenyl diphosphate (IPP) and dimethylallyl diphosphate (DMAPP). Acts in the terminal step of the DOXP/MEP pathway for isoprenoid precursor biosynthesis.</text>
</comment>
<comment type="catalytic activity">
    <reaction evidence="1">
        <text>isopentenyl diphosphate + 2 oxidized [2Fe-2S]-[ferredoxin] + H2O = (2E)-4-hydroxy-3-methylbut-2-enyl diphosphate + 2 reduced [2Fe-2S]-[ferredoxin] + 2 H(+)</text>
        <dbReference type="Rhea" id="RHEA:24488"/>
        <dbReference type="Rhea" id="RHEA-COMP:10000"/>
        <dbReference type="Rhea" id="RHEA-COMP:10001"/>
        <dbReference type="ChEBI" id="CHEBI:15377"/>
        <dbReference type="ChEBI" id="CHEBI:15378"/>
        <dbReference type="ChEBI" id="CHEBI:33737"/>
        <dbReference type="ChEBI" id="CHEBI:33738"/>
        <dbReference type="ChEBI" id="CHEBI:128753"/>
        <dbReference type="ChEBI" id="CHEBI:128769"/>
        <dbReference type="EC" id="1.17.7.4"/>
    </reaction>
</comment>
<comment type="catalytic activity">
    <reaction evidence="1">
        <text>dimethylallyl diphosphate + 2 oxidized [2Fe-2S]-[ferredoxin] + H2O = (2E)-4-hydroxy-3-methylbut-2-enyl diphosphate + 2 reduced [2Fe-2S]-[ferredoxin] + 2 H(+)</text>
        <dbReference type="Rhea" id="RHEA:24825"/>
        <dbReference type="Rhea" id="RHEA-COMP:10000"/>
        <dbReference type="Rhea" id="RHEA-COMP:10001"/>
        <dbReference type="ChEBI" id="CHEBI:15377"/>
        <dbReference type="ChEBI" id="CHEBI:15378"/>
        <dbReference type="ChEBI" id="CHEBI:33737"/>
        <dbReference type="ChEBI" id="CHEBI:33738"/>
        <dbReference type="ChEBI" id="CHEBI:57623"/>
        <dbReference type="ChEBI" id="CHEBI:128753"/>
        <dbReference type="EC" id="1.17.7.4"/>
    </reaction>
</comment>
<comment type="cofactor">
    <cofactor evidence="1">
        <name>[4Fe-4S] cluster</name>
        <dbReference type="ChEBI" id="CHEBI:49883"/>
    </cofactor>
    <text evidence="1">Binds 1 [4Fe-4S] cluster per subunit.</text>
</comment>
<comment type="pathway">
    <text evidence="1">Isoprenoid biosynthesis; dimethylallyl diphosphate biosynthesis; dimethylallyl diphosphate from (2E)-4-hydroxy-3-methylbutenyl diphosphate: step 1/1.</text>
</comment>
<comment type="pathway">
    <text evidence="1">Isoprenoid biosynthesis; isopentenyl diphosphate biosynthesis via DXP pathway; isopentenyl diphosphate from 1-deoxy-D-xylulose 5-phosphate: step 6/6.</text>
</comment>
<comment type="similarity">
    <text evidence="1">Belongs to the IspH family.</text>
</comment>
<name>ISPH_TREDE</name>
<proteinExistence type="inferred from homology"/>
<feature type="chain" id="PRO_0000128885" description="4-hydroxy-3-methylbut-2-enyl diphosphate reductase">
    <location>
        <begin position="1"/>
        <end position="289"/>
    </location>
</feature>
<feature type="active site" description="Proton donor" evidence="1">
    <location>
        <position position="132"/>
    </location>
</feature>
<feature type="binding site" evidence="1">
    <location>
        <position position="12"/>
    </location>
    <ligand>
        <name>[4Fe-4S] cluster</name>
        <dbReference type="ChEBI" id="CHEBI:49883"/>
    </ligand>
</feature>
<feature type="binding site" evidence="1">
    <location>
        <position position="44"/>
    </location>
    <ligand>
        <name>(2E)-4-hydroxy-3-methylbut-2-enyl diphosphate</name>
        <dbReference type="ChEBI" id="CHEBI:128753"/>
    </ligand>
</feature>
<feature type="binding site" evidence="1">
    <location>
        <position position="44"/>
    </location>
    <ligand>
        <name>dimethylallyl diphosphate</name>
        <dbReference type="ChEBI" id="CHEBI:57623"/>
    </ligand>
</feature>
<feature type="binding site" evidence="1">
    <location>
        <position position="44"/>
    </location>
    <ligand>
        <name>isopentenyl diphosphate</name>
        <dbReference type="ChEBI" id="CHEBI:128769"/>
    </ligand>
</feature>
<feature type="binding site" evidence="1">
    <location>
        <position position="81"/>
    </location>
    <ligand>
        <name>(2E)-4-hydroxy-3-methylbut-2-enyl diphosphate</name>
        <dbReference type="ChEBI" id="CHEBI:128753"/>
    </ligand>
</feature>
<feature type="binding site" evidence="1">
    <location>
        <position position="81"/>
    </location>
    <ligand>
        <name>dimethylallyl diphosphate</name>
        <dbReference type="ChEBI" id="CHEBI:57623"/>
    </ligand>
</feature>
<feature type="binding site" evidence="1">
    <location>
        <position position="81"/>
    </location>
    <ligand>
        <name>isopentenyl diphosphate</name>
        <dbReference type="ChEBI" id="CHEBI:128769"/>
    </ligand>
</feature>
<feature type="binding site" evidence="1">
    <location>
        <position position="103"/>
    </location>
    <ligand>
        <name>[4Fe-4S] cluster</name>
        <dbReference type="ChEBI" id="CHEBI:49883"/>
    </ligand>
</feature>
<feature type="binding site" evidence="1">
    <location>
        <position position="130"/>
    </location>
    <ligand>
        <name>(2E)-4-hydroxy-3-methylbut-2-enyl diphosphate</name>
        <dbReference type="ChEBI" id="CHEBI:128753"/>
    </ligand>
</feature>
<feature type="binding site" evidence="1">
    <location>
        <position position="130"/>
    </location>
    <ligand>
        <name>dimethylallyl diphosphate</name>
        <dbReference type="ChEBI" id="CHEBI:57623"/>
    </ligand>
</feature>
<feature type="binding site" evidence="1">
    <location>
        <position position="130"/>
    </location>
    <ligand>
        <name>isopentenyl diphosphate</name>
        <dbReference type="ChEBI" id="CHEBI:128769"/>
    </ligand>
</feature>
<feature type="binding site" evidence="1">
    <location>
        <position position="174"/>
    </location>
    <ligand>
        <name>(2E)-4-hydroxy-3-methylbut-2-enyl diphosphate</name>
        <dbReference type="ChEBI" id="CHEBI:128753"/>
    </ligand>
</feature>
<feature type="binding site" evidence="1">
    <location>
        <position position="202"/>
    </location>
    <ligand>
        <name>[4Fe-4S] cluster</name>
        <dbReference type="ChEBI" id="CHEBI:49883"/>
    </ligand>
</feature>
<feature type="binding site" evidence="1">
    <location>
        <position position="230"/>
    </location>
    <ligand>
        <name>(2E)-4-hydroxy-3-methylbut-2-enyl diphosphate</name>
        <dbReference type="ChEBI" id="CHEBI:128753"/>
    </ligand>
</feature>
<feature type="binding site" evidence="1">
    <location>
        <position position="230"/>
    </location>
    <ligand>
        <name>dimethylallyl diphosphate</name>
        <dbReference type="ChEBI" id="CHEBI:57623"/>
    </ligand>
</feature>
<feature type="binding site" evidence="1">
    <location>
        <position position="230"/>
    </location>
    <ligand>
        <name>isopentenyl diphosphate</name>
        <dbReference type="ChEBI" id="CHEBI:128769"/>
    </ligand>
</feature>
<feature type="binding site" evidence="1">
    <location>
        <position position="232"/>
    </location>
    <ligand>
        <name>(2E)-4-hydroxy-3-methylbut-2-enyl diphosphate</name>
        <dbReference type="ChEBI" id="CHEBI:128753"/>
    </ligand>
</feature>
<feature type="binding site" evidence="1">
    <location>
        <position position="232"/>
    </location>
    <ligand>
        <name>dimethylallyl diphosphate</name>
        <dbReference type="ChEBI" id="CHEBI:57623"/>
    </ligand>
</feature>
<feature type="binding site" evidence="1">
    <location>
        <position position="232"/>
    </location>
    <ligand>
        <name>isopentenyl diphosphate</name>
        <dbReference type="ChEBI" id="CHEBI:128769"/>
    </ligand>
</feature>
<feature type="binding site" evidence="1">
    <location>
        <position position="273"/>
    </location>
    <ligand>
        <name>(2E)-4-hydroxy-3-methylbut-2-enyl diphosphate</name>
        <dbReference type="ChEBI" id="CHEBI:128753"/>
    </ligand>
</feature>
<feature type="binding site" evidence="1">
    <location>
        <position position="273"/>
    </location>
    <ligand>
        <name>dimethylallyl diphosphate</name>
        <dbReference type="ChEBI" id="CHEBI:57623"/>
    </ligand>
</feature>
<feature type="binding site" evidence="1">
    <location>
        <position position="273"/>
    </location>
    <ligand>
        <name>isopentenyl diphosphate</name>
        <dbReference type="ChEBI" id="CHEBI:128769"/>
    </ligand>
</feature>
<accession>Q73NQ6</accession>
<sequence length="289" mass="31256">MVVKRAEVLGYCSGVRRAVDTVLKLAKENTENKSGLYTFGPLIHNPSTMLRLKQMGVRTIDTENFTEDEDYKDSVIVIRAHGIPPSKKSELEKSGAKVIDATCSRVKASQALAKKHSEEAFVILAGDKNHGELISIAGYAEGKCLIVQNAEEAALIDLPSSLSANGSAVLIAQTTIKESEYEAIASALKKRISDLKVFNTICPATSDRQAALKKLAYEVDALLVIGGKNSANTKRLFQTAVDTKKPAWLIEDASEIPKEIFSYSVIGLTAGASTPDFIIDEVEKKLLEG</sequence>
<reference key="1">
    <citation type="journal article" date="2004" name="Proc. Natl. Acad. Sci. U.S.A.">
        <title>Comparison of the genome of the oral pathogen Treponema denticola with other spirochete genomes.</title>
        <authorList>
            <person name="Seshadri R."/>
            <person name="Myers G.S.A."/>
            <person name="Tettelin H."/>
            <person name="Eisen J.A."/>
            <person name="Heidelberg J.F."/>
            <person name="Dodson R.J."/>
            <person name="Davidsen T.M."/>
            <person name="DeBoy R.T."/>
            <person name="Fouts D.E."/>
            <person name="Haft D.H."/>
            <person name="Selengut J."/>
            <person name="Ren Q."/>
            <person name="Brinkac L.M."/>
            <person name="Madupu R."/>
            <person name="Kolonay J.F."/>
            <person name="Durkin S.A."/>
            <person name="Daugherty S.C."/>
            <person name="Shetty J."/>
            <person name="Shvartsbeyn A."/>
            <person name="Gebregeorgis E."/>
            <person name="Geer K."/>
            <person name="Tsegaye G."/>
            <person name="Malek J.A."/>
            <person name="Ayodeji B."/>
            <person name="Shatsman S."/>
            <person name="McLeod M.P."/>
            <person name="Smajs D."/>
            <person name="Howell J.K."/>
            <person name="Pal S."/>
            <person name="Amin A."/>
            <person name="Vashisth P."/>
            <person name="McNeill T.Z."/>
            <person name="Xiang Q."/>
            <person name="Sodergren E."/>
            <person name="Baca E."/>
            <person name="Weinstock G.M."/>
            <person name="Norris S.J."/>
            <person name="Fraser C.M."/>
            <person name="Paulsen I.T."/>
        </authorList>
    </citation>
    <scope>NUCLEOTIDE SEQUENCE [LARGE SCALE GENOMIC DNA]</scope>
    <source>
        <strain>ATCC 35405 / DSM 14222 / CIP 103919 / JCM 8153 / KCTC 15104</strain>
    </source>
</reference>
<gene>
    <name evidence="1" type="primary">ispH</name>
    <name type="ordered locus">TDE_1096</name>
</gene>
<dbReference type="EC" id="1.17.7.4" evidence="1"/>
<dbReference type="EMBL" id="AE017226">
    <property type="protein sequence ID" value="AAS11585.1"/>
    <property type="molecule type" value="Genomic_DNA"/>
</dbReference>
<dbReference type="RefSeq" id="NP_971704.1">
    <property type="nucleotide sequence ID" value="NC_002967.9"/>
</dbReference>
<dbReference type="RefSeq" id="WP_002682405.1">
    <property type="nucleotide sequence ID" value="NC_002967.9"/>
</dbReference>
<dbReference type="SMR" id="Q73NQ6"/>
<dbReference type="STRING" id="243275.TDE_1096"/>
<dbReference type="PaxDb" id="243275-TDE_1096"/>
<dbReference type="GeneID" id="2740226"/>
<dbReference type="KEGG" id="tde:TDE_1096"/>
<dbReference type="PATRIC" id="fig|243275.7.peg.1055"/>
<dbReference type="eggNOG" id="COG0761">
    <property type="taxonomic scope" value="Bacteria"/>
</dbReference>
<dbReference type="HOGENOM" id="CLU_027486_0_1_12"/>
<dbReference type="OrthoDB" id="9777362at2"/>
<dbReference type="UniPathway" id="UPA00056">
    <property type="reaction ID" value="UER00097"/>
</dbReference>
<dbReference type="UniPathway" id="UPA00059">
    <property type="reaction ID" value="UER00105"/>
</dbReference>
<dbReference type="Proteomes" id="UP000008212">
    <property type="component" value="Chromosome"/>
</dbReference>
<dbReference type="GO" id="GO:0051539">
    <property type="term" value="F:4 iron, 4 sulfur cluster binding"/>
    <property type="evidence" value="ECO:0007669"/>
    <property type="project" value="UniProtKB-UniRule"/>
</dbReference>
<dbReference type="GO" id="GO:0051745">
    <property type="term" value="F:4-hydroxy-3-methylbut-2-enyl diphosphate reductase activity"/>
    <property type="evidence" value="ECO:0007669"/>
    <property type="project" value="UniProtKB-UniRule"/>
</dbReference>
<dbReference type="GO" id="GO:0046872">
    <property type="term" value="F:metal ion binding"/>
    <property type="evidence" value="ECO:0007669"/>
    <property type="project" value="UniProtKB-KW"/>
</dbReference>
<dbReference type="GO" id="GO:0050992">
    <property type="term" value="P:dimethylallyl diphosphate biosynthetic process"/>
    <property type="evidence" value="ECO:0007669"/>
    <property type="project" value="UniProtKB-UniRule"/>
</dbReference>
<dbReference type="GO" id="GO:0019288">
    <property type="term" value="P:isopentenyl diphosphate biosynthetic process, methylerythritol 4-phosphate pathway"/>
    <property type="evidence" value="ECO:0007669"/>
    <property type="project" value="UniProtKB-UniRule"/>
</dbReference>
<dbReference type="GO" id="GO:0016114">
    <property type="term" value="P:terpenoid biosynthetic process"/>
    <property type="evidence" value="ECO:0007669"/>
    <property type="project" value="UniProtKB-UniRule"/>
</dbReference>
<dbReference type="CDD" id="cd13944">
    <property type="entry name" value="lytB_ispH"/>
    <property type="match status" value="1"/>
</dbReference>
<dbReference type="Gene3D" id="3.40.50.11270">
    <property type="match status" value="1"/>
</dbReference>
<dbReference type="Gene3D" id="3.40.1010.20">
    <property type="entry name" value="4-hydroxy-3-methylbut-2-enyl diphosphate reductase, catalytic domain"/>
    <property type="match status" value="2"/>
</dbReference>
<dbReference type="HAMAP" id="MF_00191">
    <property type="entry name" value="IspH"/>
    <property type="match status" value="1"/>
</dbReference>
<dbReference type="InterPro" id="IPR003451">
    <property type="entry name" value="LytB/IspH"/>
</dbReference>
<dbReference type="NCBIfam" id="TIGR00216">
    <property type="entry name" value="ispH_lytB"/>
    <property type="match status" value="1"/>
</dbReference>
<dbReference type="PANTHER" id="PTHR30426">
    <property type="entry name" value="4-HYDROXY-3-METHYLBUT-2-ENYL DIPHOSPHATE REDUCTASE"/>
    <property type="match status" value="1"/>
</dbReference>
<dbReference type="PANTHER" id="PTHR30426:SF0">
    <property type="entry name" value="4-HYDROXY-3-METHYLBUT-2-ENYL DIPHOSPHATE REDUCTASE"/>
    <property type="match status" value="1"/>
</dbReference>
<dbReference type="Pfam" id="PF02401">
    <property type="entry name" value="LYTB"/>
    <property type="match status" value="1"/>
</dbReference>